<gene>
    <name type="primary">GER3</name>
    <name type="synonym">GLP2A</name>
    <name type="synonym">GLP2B</name>
    <name type="synonym">GLP3</name>
    <name type="synonym">GLP3A</name>
    <name type="synonym">GLP3B</name>
    <name type="ordered locus">At5g20630</name>
    <name type="ORF">T1M15.30</name>
</gene>
<sequence length="211" mass="21836">MKMIIQIFFIISLISTISFASVQDFCVADPKGPQSPSGYSCKNPDQVTENDFAFTGLGTAGNTSNIIKAAVTPAFAPAYAGINGLGVSLARLDLAGGGVIPLHTHPGASEVLVVIQGTICAGFISSANKVYLKTLNRGDSMVFPQGLLHFQLNSGKGPALAFVAFGSSSPGLQILPFALFANDLPSELVEATTFLSDAEVKKLKGVLGGTN</sequence>
<evidence type="ECO:0000250" key="1"/>
<evidence type="ECO:0000255" key="2"/>
<evidence type="ECO:0000305" key="3"/>
<evidence type="ECO:0007744" key="4">
    <source>
    </source>
</evidence>
<protein>
    <recommendedName>
        <fullName>Germin-like protein subfamily 3 member 3</fullName>
        <shortName>AtGER3</shortName>
        <shortName>AtGLP2</shortName>
    </recommendedName>
</protein>
<proteinExistence type="evidence at protein level"/>
<name>GL33_ARATH</name>
<accession>P94072</accession>
<accession>P94028</accession>
<feature type="signal peptide">
    <location>
        <begin position="1"/>
        <end position="20"/>
    </location>
</feature>
<feature type="chain" id="PRO_0000010828" description="Germin-like protein subfamily 3 member 3">
    <location>
        <begin position="21"/>
        <end position="211"/>
    </location>
</feature>
<feature type="domain" description="Cupin type-1" evidence="2">
    <location>
        <begin position="55"/>
        <end position="201"/>
    </location>
</feature>
<feature type="binding site" evidence="1">
    <location>
        <position position="103"/>
    </location>
    <ligand>
        <name>Mn(2+)</name>
        <dbReference type="ChEBI" id="CHEBI:29035"/>
    </ligand>
</feature>
<feature type="binding site" evidence="1">
    <location>
        <position position="105"/>
    </location>
    <ligand>
        <name>Mn(2+)</name>
        <dbReference type="ChEBI" id="CHEBI:29035"/>
    </ligand>
</feature>
<feature type="binding site" evidence="1">
    <location>
        <position position="110"/>
    </location>
    <ligand>
        <name>Mn(2+)</name>
        <dbReference type="ChEBI" id="CHEBI:29035"/>
    </ligand>
</feature>
<feature type="binding site" evidence="1">
    <location>
        <position position="149"/>
    </location>
    <ligand>
        <name>Mn(2+)</name>
        <dbReference type="ChEBI" id="CHEBI:29035"/>
    </ligand>
</feature>
<feature type="modified residue" description="Phosphoserine" evidence="4">
    <location>
        <position position="140"/>
    </location>
</feature>
<feature type="glycosylation site" description="N-linked (GlcNAc...) asparagine" evidence="2">
    <location>
        <position position="62"/>
    </location>
</feature>
<feature type="disulfide bond" evidence="1">
    <location>
        <begin position="26"/>
        <end position="41"/>
    </location>
</feature>
<feature type="sequence conflict" description="In Ref. 3; AAB51581/AAB51566." evidence="3" ref="3">
    <original>T</original>
    <variation>K</variation>
    <location>
        <position position="59"/>
    </location>
</feature>
<dbReference type="EMBL" id="Y12673">
    <property type="protein sequence ID" value="CAA73213.1"/>
    <property type="molecule type" value="mRNA"/>
</dbReference>
<dbReference type="EMBL" id="D89374">
    <property type="protein sequence ID" value="BAA77208.1"/>
    <property type="molecule type" value="Genomic_DNA"/>
</dbReference>
<dbReference type="EMBL" id="U75188">
    <property type="protein sequence ID" value="AAB51566.1"/>
    <property type="molecule type" value="mRNA"/>
</dbReference>
<dbReference type="EMBL" id="U75193">
    <property type="protein sequence ID" value="AAB51571.1"/>
    <property type="molecule type" value="mRNA"/>
</dbReference>
<dbReference type="EMBL" id="U75195">
    <property type="protein sequence ID" value="AAB51573.1"/>
    <property type="molecule type" value="mRNA"/>
</dbReference>
<dbReference type="EMBL" id="U75203">
    <property type="protein sequence ID" value="AAB51581.1"/>
    <property type="molecule type" value="mRNA"/>
</dbReference>
<dbReference type="EMBL" id="U75205">
    <property type="protein sequence ID" value="AAB51583.1"/>
    <property type="molecule type" value="mRNA"/>
</dbReference>
<dbReference type="EMBL" id="AJ132237">
    <property type="protein sequence ID" value="CAB54516.1"/>
    <property type="molecule type" value="Genomic_DNA"/>
</dbReference>
<dbReference type="EMBL" id="AF296832">
    <property type="status" value="NOT_ANNOTATED_CDS"/>
    <property type="molecule type" value="Genomic_DNA"/>
</dbReference>
<dbReference type="EMBL" id="CP002688">
    <property type="protein sequence ID" value="AED92868.1"/>
    <property type="molecule type" value="Genomic_DNA"/>
</dbReference>
<dbReference type="EMBL" id="AY039516">
    <property type="protein sequence ID" value="AAK62573.1"/>
    <property type="molecule type" value="mRNA"/>
</dbReference>
<dbReference type="EMBL" id="AY055786">
    <property type="protein sequence ID" value="AAL06953.1"/>
    <property type="molecule type" value="mRNA"/>
</dbReference>
<dbReference type="RefSeq" id="NP_197563.1">
    <property type="nucleotide sequence ID" value="NM_122070.3"/>
</dbReference>
<dbReference type="SMR" id="P94072"/>
<dbReference type="BioGRID" id="17460">
    <property type="interactions" value="3"/>
</dbReference>
<dbReference type="FunCoup" id="P94072">
    <property type="interactions" value="226"/>
</dbReference>
<dbReference type="STRING" id="3702.P94072"/>
<dbReference type="Allergome" id="779">
    <property type="allergen name" value="Ara t GLP"/>
</dbReference>
<dbReference type="GlyCosmos" id="P94072">
    <property type="glycosylation" value="1 site, No reported glycans"/>
</dbReference>
<dbReference type="GlyGen" id="P94072">
    <property type="glycosylation" value="2 sites"/>
</dbReference>
<dbReference type="iPTMnet" id="P94072"/>
<dbReference type="PaxDb" id="3702-AT5G20630.1"/>
<dbReference type="ProteomicsDB" id="230488"/>
<dbReference type="EnsemblPlants" id="AT5G20630.1">
    <property type="protein sequence ID" value="AT5G20630.1"/>
    <property type="gene ID" value="AT5G20630"/>
</dbReference>
<dbReference type="GeneID" id="832185"/>
<dbReference type="Gramene" id="AT5G20630.1">
    <property type="protein sequence ID" value="AT5G20630.1"/>
    <property type="gene ID" value="AT5G20630"/>
</dbReference>
<dbReference type="KEGG" id="ath:AT5G20630"/>
<dbReference type="Araport" id="AT5G20630"/>
<dbReference type="TAIR" id="AT5G20630">
    <property type="gene designation" value="GER3"/>
</dbReference>
<dbReference type="eggNOG" id="ENOG502QT7C">
    <property type="taxonomic scope" value="Eukaryota"/>
</dbReference>
<dbReference type="HOGENOM" id="CLU_015790_0_2_1"/>
<dbReference type="InParanoid" id="P94072"/>
<dbReference type="OMA" id="VQGTICA"/>
<dbReference type="OrthoDB" id="1921208at2759"/>
<dbReference type="PhylomeDB" id="P94072"/>
<dbReference type="PRO" id="PR:P94072"/>
<dbReference type="Proteomes" id="UP000006548">
    <property type="component" value="Chromosome 5"/>
</dbReference>
<dbReference type="ExpressionAtlas" id="P94072">
    <property type="expression patterns" value="baseline and differential"/>
</dbReference>
<dbReference type="GO" id="GO:0048046">
    <property type="term" value="C:apoplast"/>
    <property type="evidence" value="ECO:0007005"/>
    <property type="project" value="TAIR"/>
</dbReference>
<dbReference type="GO" id="GO:0031012">
    <property type="term" value="C:extracellular matrix"/>
    <property type="evidence" value="ECO:0000314"/>
    <property type="project" value="TAIR"/>
</dbReference>
<dbReference type="GO" id="GO:0005634">
    <property type="term" value="C:nucleus"/>
    <property type="evidence" value="ECO:0007005"/>
    <property type="project" value="TAIR"/>
</dbReference>
<dbReference type="GO" id="GO:0009536">
    <property type="term" value="C:plastid"/>
    <property type="evidence" value="ECO:0007005"/>
    <property type="project" value="TAIR"/>
</dbReference>
<dbReference type="GO" id="GO:0099503">
    <property type="term" value="C:secretory vesicle"/>
    <property type="evidence" value="ECO:0007005"/>
    <property type="project" value="TAIR"/>
</dbReference>
<dbReference type="GO" id="GO:0030145">
    <property type="term" value="F:manganese ion binding"/>
    <property type="evidence" value="ECO:0007669"/>
    <property type="project" value="InterPro"/>
</dbReference>
<dbReference type="CDD" id="cd02241">
    <property type="entry name" value="cupin_OxOx"/>
    <property type="match status" value="1"/>
</dbReference>
<dbReference type="FunFam" id="2.60.120.10:FF:000047">
    <property type="entry name" value="Auxin-binding protein ABP19a"/>
    <property type="match status" value="1"/>
</dbReference>
<dbReference type="Gene3D" id="2.60.120.10">
    <property type="entry name" value="Jelly Rolls"/>
    <property type="match status" value="1"/>
</dbReference>
<dbReference type="InterPro" id="IPR006045">
    <property type="entry name" value="Cupin_1"/>
</dbReference>
<dbReference type="InterPro" id="IPR001929">
    <property type="entry name" value="Germin"/>
</dbReference>
<dbReference type="InterPro" id="IPR019780">
    <property type="entry name" value="Germin_Mn-BS"/>
</dbReference>
<dbReference type="InterPro" id="IPR014710">
    <property type="entry name" value="RmlC-like_jellyroll"/>
</dbReference>
<dbReference type="InterPro" id="IPR011051">
    <property type="entry name" value="RmlC_Cupin_sf"/>
</dbReference>
<dbReference type="PANTHER" id="PTHR31238">
    <property type="entry name" value="GERMIN-LIKE PROTEIN SUBFAMILY 3 MEMBER 3"/>
    <property type="match status" value="1"/>
</dbReference>
<dbReference type="Pfam" id="PF00190">
    <property type="entry name" value="Cupin_1"/>
    <property type="match status" value="1"/>
</dbReference>
<dbReference type="PRINTS" id="PR00325">
    <property type="entry name" value="GERMIN"/>
</dbReference>
<dbReference type="SMART" id="SM00835">
    <property type="entry name" value="Cupin_1"/>
    <property type="match status" value="1"/>
</dbReference>
<dbReference type="SUPFAM" id="SSF51182">
    <property type="entry name" value="RmlC-like cupins"/>
    <property type="match status" value="1"/>
</dbReference>
<dbReference type="PROSITE" id="PS00725">
    <property type="entry name" value="GERMIN"/>
    <property type="match status" value="1"/>
</dbReference>
<reference key="1">
    <citation type="journal article" date="1997" name="Plant Mol. Biol.">
        <title>cDNA sequence, genomic organization and differential expression of three Arabidopsis genes for germin/oxalate oxidase-like proteins.</title>
        <authorList>
            <person name="Membre N."/>
            <person name="Berna A."/>
            <person name="Neutelings G."/>
            <person name="David A."/>
            <person name="David H."/>
            <person name="Staiger D."/>
            <person name="Saez Vasquez J."/>
            <person name="Raynal M."/>
            <person name="Delseny M."/>
            <person name="Bernier F."/>
        </authorList>
    </citation>
    <scope>NUCLEOTIDE SEQUENCE [MRNA]</scope>
</reference>
<reference key="2">
    <citation type="journal article" date="1998" name="Plant Biotechnol.">
        <title>Molecular identification of two genes of germin-like protein in Arabidopsis.</title>
        <authorList>
            <person name="Sage-Ono K."/>
            <person name="Ono M."/>
            <person name="Oguchi T."/>
            <person name="Hasebe M."/>
            <person name="Xu Z.-J."/>
            <person name="Ueda K."/>
            <person name="Inoue M."/>
            <person name="Kamada H."/>
        </authorList>
    </citation>
    <scope>NUCLEOTIDE SEQUENCE [GENOMIC DNA]</scope>
    <source>
        <strain>cv. Landsberg erecta</strain>
    </source>
</reference>
<reference key="3">
    <citation type="journal article" date="1998" name="Plant Mol. Biol.">
        <title>Arabidopsis thaliana contains a large family of germin-like proteins: characterization of cDNA and genomic sequences encoding 12 unique family members.</title>
        <authorList>
            <person name="Carter C."/>
            <person name="Graham R.A."/>
            <person name="Thornburg R.W."/>
        </authorList>
    </citation>
    <scope>NUCLEOTIDE SEQUENCE [MRNA]</scope>
    <source>
        <strain>cv. Columbia</strain>
    </source>
</reference>
<reference key="4">
    <citation type="journal article" date="1999" name="Plant Mol. Biol.">
        <title>The Atger3 promoter confers circadian clock-regulated transcription with peak expression at the beginning of the night.</title>
        <authorList>
            <person name="Staiger D.J."/>
            <person name="Apel K."/>
            <person name="Trepp G.B."/>
        </authorList>
    </citation>
    <scope>NUCLEOTIDE SEQUENCE [GENOMIC DNA]</scope>
</reference>
<reference key="5">
    <citation type="journal article" date="2000" name="Nature">
        <title>Sequence and analysis of chromosome 5 of the plant Arabidopsis thaliana.</title>
        <authorList>
            <person name="Tabata S."/>
            <person name="Kaneko T."/>
            <person name="Nakamura Y."/>
            <person name="Kotani H."/>
            <person name="Kato T."/>
            <person name="Asamizu E."/>
            <person name="Miyajima N."/>
            <person name="Sasamoto S."/>
            <person name="Kimura T."/>
            <person name="Hosouchi T."/>
            <person name="Kawashima K."/>
            <person name="Kohara M."/>
            <person name="Matsumoto M."/>
            <person name="Matsuno A."/>
            <person name="Muraki A."/>
            <person name="Nakayama S."/>
            <person name="Nakazaki N."/>
            <person name="Naruo K."/>
            <person name="Okumura S."/>
            <person name="Shinpo S."/>
            <person name="Takeuchi C."/>
            <person name="Wada T."/>
            <person name="Watanabe A."/>
            <person name="Yamada M."/>
            <person name="Yasuda M."/>
            <person name="Sato S."/>
            <person name="de la Bastide M."/>
            <person name="Huang E."/>
            <person name="Spiegel L."/>
            <person name="Gnoj L."/>
            <person name="O'Shaughnessy A."/>
            <person name="Preston R."/>
            <person name="Habermann K."/>
            <person name="Murray J."/>
            <person name="Johnson D."/>
            <person name="Rohlfing T."/>
            <person name="Nelson J."/>
            <person name="Stoneking T."/>
            <person name="Pepin K."/>
            <person name="Spieth J."/>
            <person name="Sekhon M."/>
            <person name="Armstrong J."/>
            <person name="Becker M."/>
            <person name="Belter E."/>
            <person name="Cordum H."/>
            <person name="Cordes M."/>
            <person name="Courtney L."/>
            <person name="Courtney W."/>
            <person name="Dante M."/>
            <person name="Du H."/>
            <person name="Edwards J."/>
            <person name="Fryman J."/>
            <person name="Haakensen B."/>
            <person name="Lamar E."/>
            <person name="Latreille P."/>
            <person name="Leonard S."/>
            <person name="Meyer R."/>
            <person name="Mulvaney E."/>
            <person name="Ozersky P."/>
            <person name="Riley A."/>
            <person name="Strowmatt C."/>
            <person name="Wagner-McPherson C."/>
            <person name="Wollam A."/>
            <person name="Yoakum M."/>
            <person name="Bell M."/>
            <person name="Dedhia N."/>
            <person name="Parnell L."/>
            <person name="Shah R."/>
            <person name="Rodriguez M."/>
            <person name="Hoon See L."/>
            <person name="Vil D."/>
            <person name="Baker J."/>
            <person name="Kirchoff K."/>
            <person name="Toth K."/>
            <person name="King L."/>
            <person name="Bahret A."/>
            <person name="Miller B."/>
            <person name="Marra M.A."/>
            <person name="Martienssen R."/>
            <person name="McCombie W.R."/>
            <person name="Wilson R.K."/>
            <person name="Murphy G."/>
            <person name="Bancroft I."/>
            <person name="Volckaert G."/>
            <person name="Wambutt R."/>
            <person name="Duesterhoeft A."/>
            <person name="Stiekema W."/>
            <person name="Pohl T."/>
            <person name="Entian K.-D."/>
            <person name="Terryn N."/>
            <person name="Hartley N."/>
            <person name="Bent E."/>
            <person name="Johnson S."/>
            <person name="Langham S.-A."/>
            <person name="McCullagh B."/>
            <person name="Robben J."/>
            <person name="Grymonprez B."/>
            <person name="Zimmermann W."/>
            <person name="Ramsperger U."/>
            <person name="Wedler H."/>
            <person name="Balke K."/>
            <person name="Wedler E."/>
            <person name="Peters S."/>
            <person name="van Staveren M."/>
            <person name="Dirkse W."/>
            <person name="Mooijman P."/>
            <person name="Klein Lankhorst R."/>
            <person name="Weitzenegger T."/>
            <person name="Bothe G."/>
            <person name="Rose M."/>
            <person name="Hauf J."/>
            <person name="Berneiser S."/>
            <person name="Hempel S."/>
            <person name="Feldpausch M."/>
            <person name="Lamberth S."/>
            <person name="Villarroel R."/>
            <person name="Gielen J."/>
            <person name="Ardiles W."/>
            <person name="Bents O."/>
            <person name="Lemcke K."/>
            <person name="Kolesov G."/>
            <person name="Mayer K.F.X."/>
            <person name="Rudd S."/>
            <person name="Schoof H."/>
            <person name="Schueller C."/>
            <person name="Zaccaria P."/>
            <person name="Mewes H.-W."/>
            <person name="Bevan M."/>
            <person name="Fransz P.F."/>
        </authorList>
    </citation>
    <scope>NUCLEOTIDE SEQUENCE [LARGE SCALE GENOMIC DNA]</scope>
    <source>
        <strain>cv. Columbia</strain>
    </source>
</reference>
<reference key="6">
    <citation type="journal article" date="2017" name="Plant J.">
        <title>Araport11: a complete reannotation of the Arabidopsis thaliana reference genome.</title>
        <authorList>
            <person name="Cheng C.Y."/>
            <person name="Krishnakumar V."/>
            <person name="Chan A.P."/>
            <person name="Thibaud-Nissen F."/>
            <person name="Schobel S."/>
            <person name="Town C.D."/>
        </authorList>
    </citation>
    <scope>GENOME REANNOTATION</scope>
    <source>
        <strain>cv. Columbia</strain>
    </source>
</reference>
<reference key="7">
    <citation type="journal article" date="2003" name="Science">
        <title>Empirical analysis of transcriptional activity in the Arabidopsis genome.</title>
        <authorList>
            <person name="Yamada K."/>
            <person name="Lim J."/>
            <person name="Dale J.M."/>
            <person name="Chen H."/>
            <person name="Shinn P."/>
            <person name="Palm C.J."/>
            <person name="Southwick A.M."/>
            <person name="Wu H.C."/>
            <person name="Kim C.J."/>
            <person name="Nguyen M."/>
            <person name="Pham P.K."/>
            <person name="Cheuk R.F."/>
            <person name="Karlin-Newmann G."/>
            <person name="Liu S.X."/>
            <person name="Lam B."/>
            <person name="Sakano H."/>
            <person name="Wu T."/>
            <person name="Yu G."/>
            <person name="Miranda M."/>
            <person name="Quach H.L."/>
            <person name="Tripp M."/>
            <person name="Chang C.H."/>
            <person name="Lee J.M."/>
            <person name="Toriumi M.J."/>
            <person name="Chan M.M."/>
            <person name="Tang C.C."/>
            <person name="Onodera C.S."/>
            <person name="Deng J.M."/>
            <person name="Akiyama K."/>
            <person name="Ansari Y."/>
            <person name="Arakawa T."/>
            <person name="Banh J."/>
            <person name="Banno F."/>
            <person name="Bowser L."/>
            <person name="Brooks S.Y."/>
            <person name="Carninci P."/>
            <person name="Chao Q."/>
            <person name="Choy N."/>
            <person name="Enju A."/>
            <person name="Goldsmith A.D."/>
            <person name="Gurjal M."/>
            <person name="Hansen N.F."/>
            <person name="Hayashizaki Y."/>
            <person name="Johnson-Hopson C."/>
            <person name="Hsuan V.W."/>
            <person name="Iida K."/>
            <person name="Karnes M."/>
            <person name="Khan S."/>
            <person name="Koesema E."/>
            <person name="Ishida J."/>
            <person name="Jiang P.X."/>
            <person name="Jones T."/>
            <person name="Kawai J."/>
            <person name="Kamiya A."/>
            <person name="Meyers C."/>
            <person name="Nakajima M."/>
            <person name="Narusaka M."/>
            <person name="Seki M."/>
            <person name="Sakurai T."/>
            <person name="Satou M."/>
            <person name="Tamse R."/>
            <person name="Vaysberg M."/>
            <person name="Wallender E.K."/>
            <person name="Wong C."/>
            <person name="Yamamura Y."/>
            <person name="Yuan S."/>
            <person name="Shinozaki K."/>
            <person name="Davis R.W."/>
            <person name="Theologis A."/>
            <person name="Ecker J.R."/>
        </authorList>
    </citation>
    <scope>NUCLEOTIDE SEQUENCE [LARGE SCALE MRNA]</scope>
    <source>
        <strain>cv. Columbia</strain>
    </source>
</reference>
<reference key="8">
    <citation type="journal article" date="2000" name="Planta">
        <title>Arabidopsis thaliana germin-like proteins: common and specific features point to a variety of functions.</title>
        <authorList>
            <person name="Membre N."/>
            <person name="Bernier F."/>
            <person name="Staiger D."/>
            <person name="Berna A."/>
        </authorList>
    </citation>
    <scope>CHARACTERIZATION</scope>
</reference>
<reference key="9">
    <citation type="journal article" date="2012" name="J. Proteome Res.">
        <title>Identification of phosphoproteins in Arabidopsis thaliana leaves using polyethylene glycol fractionation, immobilized metal-ion affinity chromatography, two-dimensional gel electrophoresis and mass spectrometry.</title>
        <authorList>
            <person name="Aryal U.K."/>
            <person name="Krochko J.E."/>
            <person name="Ross A.R."/>
        </authorList>
    </citation>
    <scope>PHOSPHORYLATION [LARGE SCALE ANALYSIS] AT SER-140</scope>
    <scope>IDENTIFICATION BY MASS SPECTROMETRY [LARGE SCALE ANALYSIS]</scope>
</reference>
<organism>
    <name type="scientific">Arabidopsis thaliana</name>
    <name type="common">Mouse-ear cress</name>
    <dbReference type="NCBI Taxonomy" id="3702"/>
    <lineage>
        <taxon>Eukaryota</taxon>
        <taxon>Viridiplantae</taxon>
        <taxon>Streptophyta</taxon>
        <taxon>Embryophyta</taxon>
        <taxon>Tracheophyta</taxon>
        <taxon>Spermatophyta</taxon>
        <taxon>Magnoliopsida</taxon>
        <taxon>eudicotyledons</taxon>
        <taxon>Gunneridae</taxon>
        <taxon>Pentapetalae</taxon>
        <taxon>rosids</taxon>
        <taxon>malvids</taxon>
        <taxon>Brassicales</taxon>
        <taxon>Brassicaceae</taxon>
        <taxon>Camelineae</taxon>
        <taxon>Arabidopsis</taxon>
    </lineage>
</organism>
<comment type="function">
    <text>May play a role in plant defense. Probably has no oxalate oxidase activity even if the active site is conserved.</text>
</comment>
<comment type="subunit">
    <text evidence="1">Oligomer (believed to be a pentamer but probably hexamer).</text>
</comment>
<comment type="subcellular location">
    <subcellularLocation>
        <location evidence="1">Secreted</location>
        <location evidence="1">Extracellular space</location>
        <location evidence="1">Apoplast</location>
    </subcellularLocation>
</comment>
<comment type="tissue specificity">
    <text>Expressed in leaves and flowers.</text>
</comment>
<comment type="induction">
    <text>Expressed with a circadian rhythm, with peak expression at the beginning of the night.</text>
</comment>
<comment type="similarity">
    <text evidence="3">Belongs to the germin family.</text>
</comment>
<keyword id="KW-0052">Apoplast</keyword>
<keyword id="KW-1015">Disulfide bond</keyword>
<keyword id="KW-0325">Glycoprotein</keyword>
<keyword id="KW-0464">Manganese</keyword>
<keyword id="KW-0479">Metal-binding</keyword>
<keyword id="KW-0597">Phosphoprotein</keyword>
<keyword id="KW-1185">Reference proteome</keyword>
<keyword id="KW-0964">Secreted</keyword>
<keyword id="KW-0732">Signal</keyword>